<gene>
    <name evidence="1" type="primary">argG</name>
    <name type="ordered locus">RoseRS_4058</name>
</gene>
<comment type="catalytic activity">
    <reaction evidence="1">
        <text>L-citrulline + L-aspartate + ATP = 2-(N(omega)-L-arginino)succinate + AMP + diphosphate + H(+)</text>
        <dbReference type="Rhea" id="RHEA:10932"/>
        <dbReference type="ChEBI" id="CHEBI:15378"/>
        <dbReference type="ChEBI" id="CHEBI:29991"/>
        <dbReference type="ChEBI" id="CHEBI:30616"/>
        <dbReference type="ChEBI" id="CHEBI:33019"/>
        <dbReference type="ChEBI" id="CHEBI:57472"/>
        <dbReference type="ChEBI" id="CHEBI:57743"/>
        <dbReference type="ChEBI" id="CHEBI:456215"/>
        <dbReference type="EC" id="6.3.4.5"/>
    </reaction>
</comment>
<comment type="pathway">
    <text evidence="1">Amino-acid biosynthesis; L-arginine biosynthesis; L-arginine from L-ornithine and carbamoyl phosphate: step 2/3.</text>
</comment>
<comment type="subunit">
    <text evidence="1">Homotetramer.</text>
</comment>
<comment type="subcellular location">
    <subcellularLocation>
        <location evidence="1">Cytoplasm</location>
    </subcellularLocation>
</comment>
<comment type="similarity">
    <text evidence="1">Belongs to the argininosuccinate synthase family. Type 1 subfamily.</text>
</comment>
<sequence>MSAKVNKVVLAYSGGLDTSIIVPWLKQNYGNPEVICYCANIGQDDELSGLEEKAIATGASKCYVEDLREEFVRDFLFPLLQSGAVYERTYLLGTSVARPLIARRQAEIALQEGADALAHGCTGKGNDQVRFELTYMAFAPHLKVIAPWREWNIRSREDALDYAAEHNVPVTATLKSIYSRDRNIWHMSHEGGILEDPWNEPEEAMYTLTTDPEAAPDEPEYVVIGFEQGTPVSVNGKRLGPVELLLTLNDIGAKHGIGRVDLVENRLVGMKSHGVYETPGGTILRVAHQGLEQLTLDRDTLHYKDVIAHRYAELVYYGQWYTPLREALDAFVRVTQRNVTGEARLKLYKGNATLVGRRAAKSLYNPDIASFTMSDSYNQKDAEGFIKIFGLPVKVQALLEGRSRGER</sequence>
<keyword id="KW-0028">Amino-acid biosynthesis</keyword>
<keyword id="KW-0055">Arginine biosynthesis</keyword>
<keyword id="KW-0067">ATP-binding</keyword>
<keyword id="KW-0963">Cytoplasm</keyword>
<keyword id="KW-0436">Ligase</keyword>
<keyword id="KW-0547">Nucleotide-binding</keyword>
<feature type="chain" id="PRO_1000057042" description="Argininosuccinate synthase">
    <location>
        <begin position="1"/>
        <end position="407"/>
    </location>
</feature>
<feature type="binding site" evidence="1">
    <location>
        <begin position="11"/>
        <end position="19"/>
    </location>
    <ligand>
        <name>ATP</name>
        <dbReference type="ChEBI" id="CHEBI:30616"/>
    </ligand>
</feature>
<feature type="binding site" evidence="1">
    <location>
        <position position="39"/>
    </location>
    <ligand>
        <name>ATP</name>
        <dbReference type="ChEBI" id="CHEBI:30616"/>
    </ligand>
</feature>
<feature type="binding site" evidence="1">
    <location>
        <position position="90"/>
    </location>
    <ligand>
        <name>L-citrulline</name>
        <dbReference type="ChEBI" id="CHEBI:57743"/>
    </ligand>
</feature>
<feature type="binding site" evidence="1">
    <location>
        <position position="95"/>
    </location>
    <ligand>
        <name>L-citrulline</name>
        <dbReference type="ChEBI" id="CHEBI:57743"/>
    </ligand>
</feature>
<feature type="binding site" evidence="1">
    <location>
        <position position="120"/>
    </location>
    <ligand>
        <name>ATP</name>
        <dbReference type="ChEBI" id="CHEBI:30616"/>
    </ligand>
</feature>
<feature type="binding site" evidence="1">
    <location>
        <position position="122"/>
    </location>
    <ligand>
        <name>L-aspartate</name>
        <dbReference type="ChEBI" id="CHEBI:29991"/>
    </ligand>
</feature>
<feature type="binding site" evidence="1">
    <location>
        <position position="126"/>
    </location>
    <ligand>
        <name>L-aspartate</name>
        <dbReference type="ChEBI" id="CHEBI:29991"/>
    </ligand>
</feature>
<feature type="binding site" evidence="1">
    <location>
        <position position="126"/>
    </location>
    <ligand>
        <name>L-citrulline</name>
        <dbReference type="ChEBI" id="CHEBI:57743"/>
    </ligand>
</feature>
<feature type="binding site" evidence="1">
    <location>
        <position position="127"/>
    </location>
    <ligand>
        <name>L-aspartate</name>
        <dbReference type="ChEBI" id="CHEBI:29991"/>
    </ligand>
</feature>
<feature type="binding site" evidence="1">
    <location>
        <position position="130"/>
    </location>
    <ligand>
        <name>L-citrulline</name>
        <dbReference type="ChEBI" id="CHEBI:57743"/>
    </ligand>
</feature>
<feature type="binding site" evidence="1">
    <location>
        <position position="179"/>
    </location>
    <ligand>
        <name>L-citrulline</name>
        <dbReference type="ChEBI" id="CHEBI:57743"/>
    </ligand>
</feature>
<feature type="binding site" evidence="1">
    <location>
        <position position="188"/>
    </location>
    <ligand>
        <name>L-citrulline</name>
        <dbReference type="ChEBI" id="CHEBI:57743"/>
    </ligand>
</feature>
<feature type="binding site" evidence="1">
    <location>
        <position position="264"/>
    </location>
    <ligand>
        <name>L-citrulline</name>
        <dbReference type="ChEBI" id="CHEBI:57743"/>
    </ligand>
</feature>
<feature type="binding site" evidence="1">
    <location>
        <position position="276"/>
    </location>
    <ligand>
        <name>L-citrulline</name>
        <dbReference type="ChEBI" id="CHEBI:57743"/>
    </ligand>
</feature>
<evidence type="ECO:0000255" key="1">
    <source>
        <dbReference type="HAMAP-Rule" id="MF_00005"/>
    </source>
</evidence>
<organism>
    <name type="scientific">Roseiflexus sp. (strain RS-1)</name>
    <dbReference type="NCBI Taxonomy" id="357808"/>
    <lineage>
        <taxon>Bacteria</taxon>
        <taxon>Bacillati</taxon>
        <taxon>Chloroflexota</taxon>
        <taxon>Chloroflexia</taxon>
        <taxon>Chloroflexales</taxon>
        <taxon>Roseiflexineae</taxon>
        <taxon>Roseiflexaceae</taxon>
        <taxon>Roseiflexus</taxon>
    </lineage>
</organism>
<proteinExistence type="inferred from homology"/>
<reference key="1">
    <citation type="submission" date="2007-04" db="EMBL/GenBank/DDBJ databases">
        <title>Complete sequence of Roseiflexus sp. RS-1.</title>
        <authorList>
            <consortium name="US DOE Joint Genome Institute"/>
            <person name="Copeland A."/>
            <person name="Lucas S."/>
            <person name="Lapidus A."/>
            <person name="Barry K."/>
            <person name="Detter J.C."/>
            <person name="Glavina del Rio T."/>
            <person name="Hammon N."/>
            <person name="Israni S."/>
            <person name="Dalin E."/>
            <person name="Tice H."/>
            <person name="Pitluck S."/>
            <person name="Chertkov O."/>
            <person name="Brettin T."/>
            <person name="Bruce D."/>
            <person name="Han C."/>
            <person name="Schmutz J."/>
            <person name="Larimer F."/>
            <person name="Land M."/>
            <person name="Hauser L."/>
            <person name="Kyrpides N."/>
            <person name="Mikhailova N."/>
            <person name="Bryant D.A."/>
            <person name="Richardson P."/>
        </authorList>
    </citation>
    <scope>NUCLEOTIDE SEQUENCE [LARGE SCALE GENOMIC DNA]</scope>
    <source>
        <strain>RS-1</strain>
    </source>
</reference>
<name>ASSY_ROSS1</name>
<dbReference type="EC" id="6.3.4.5" evidence="1"/>
<dbReference type="EMBL" id="CP000686">
    <property type="protein sequence ID" value="ABQ92402.1"/>
    <property type="molecule type" value="Genomic_DNA"/>
</dbReference>
<dbReference type="RefSeq" id="WP_011958741.1">
    <property type="nucleotide sequence ID" value="NC_009523.1"/>
</dbReference>
<dbReference type="SMR" id="A5V0J9"/>
<dbReference type="STRING" id="357808.RoseRS_4058"/>
<dbReference type="KEGG" id="rrs:RoseRS_4058"/>
<dbReference type="eggNOG" id="COG0137">
    <property type="taxonomic scope" value="Bacteria"/>
</dbReference>
<dbReference type="HOGENOM" id="CLU_032784_4_2_0"/>
<dbReference type="OrthoDB" id="9801641at2"/>
<dbReference type="UniPathway" id="UPA00068">
    <property type="reaction ID" value="UER00113"/>
</dbReference>
<dbReference type="Proteomes" id="UP000006554">
    <property type="component" value="Chromosome"/>
</dbReference>
<dbReference type="GO" id="GO:0005737">
    <property type="term" value="C:cytoplasm"/>
    <property type="evidence" value="ECO:0007669"/>
    <property type="project" value="UniProtKB-SubCell"/>
</dbReference>
<dbReference type="GO" id="GO:0004055">
    <property type="term" value="F:argininosuccinate synthase activity"/>
    <property type="evidence" value="ECO:0007669"/>
    <property type="project" value="UniProtKB-UniRule"/>
</dbReference>
<dbReference type="GO" id="GO:0005524">
    <property type="term" value="F:ATP binding"/>
    <property type="evidence" value="ECO:0007669"/>
    <property type="project" value="UniProtKB-UniRule"/>
</dbReference>
<dbReference type="GO" id="GO:0000053">
    <property type="term" value="P:argininosuccinate metabolic process"/>
    <property type="evidence" value="ECO:0007669"/>
    <property type="project" value="TreeGrafter"/>
</dbReference>
<dbReference type="GO" id="GO:0006526">
    <property type="term" value="P:L-arginine biosynthetic process"/>
    <property type="evidence" value="ECO:0007669"/>
    <property type="project" value="UniProtKB-UniRule"/>
</dbReference>
<dbReference type="GO" id="GO:0000050">
    <property type="term" value="P:urea cycle"/>
    <property type="evidence" value="ECO:0007669"/>
    <property type="project" value="TreeGrafter"/>
</dbReference>
<dbReference type="CDD" id="cd01999">
    <property type="entry name" value="ASS"/>
    <property type="match status" value="1"/>
</dbReference>
<dbReference type="FunFam" id="3.40.50.620:FF:000019">
    <property type="entry name" value="Argininosuccinate synthase"/>
    <property type="match status" value="1"/>
</dbReference>
<dbReference type="FunFam" id="3.90.1260.10:FF:000007">
    <property type="entry name" value="Argininosuccinate synthase"/>
    <property type="match status" value="1"/>
</dbReference>
<dbReference type="Gene3D" id="3.90.1260.10">
    <property type="entry name" value="Argininosuccinate synthetase, chain A, domain 2"/>
    <property type="match status" value="1"/>
</dbReference>
<dbReference type="Gene3D" id="3.40.50.620">
    <property type="entry name" value="HUPs"/>
    <property type="match status" value="1"/>
</dbReference>
<dbReference type="Gene3D" id="1.20.5.470">
    <property type="entry name" value="Single helix bin"/>
    <property type="match status" value="1"/>
</dbReference>
<dbReference type="HAMAP" id="MF_00005">
    <property type="entry name" value="Arg_succ_synth_type1"/>
    <property type="match status" value="1"/>
</dbReference>
<dbReference type="InterPro" id="IPR048268">
    <property type="entry name" value="Arginosuc_syn_C"/>
</dbReference>
<dbReference type="InterPro" id="IPR048267">
    <property type="entry name" value="Arginosuc_syn_N"/>
</dbReference>
<dbReference type="InterPro" id="IPR001518">
    <property type="entry name" value="Arginosuc_synth"/>
</dbReference>
<dbReference type="InterPro" id="IPR018223">
    <property type="entry name" value="Arginosuc_synth_CS"/>
</dbReference>
<dbReference type="InterPro" id="IPR023434">
    <property type="entry name" value="Arginosuc_synth_type_1_subfam"/>
</dbReference>
<dbReference type="InterPro" id="IPR024074">
    <property type="entry name" value="AS_cat/multimer_dom_body"/>
</dbReference>
<dbReference type="InterPro" id="IPR014729">
    <property type="entry name" value="Rossmann-like_a/b/a_fold"/>
</dbReference>
<dbReference type="NCBIfam" id="TIGR00032">
    <property type="entry name" value="argG"/>
    <property type="match status" value="1"/>
</dbReference>
<dbReference type="NCBIfam" id="NF001770">
    <property type="entry name" value="PRK00509.1"/>
    <property type="match status" value="1"/>
</dbReference>
<dbReference type="PANTHER" id="PTHR11587">
    <property type="entry name" value="ARGININOSUCCINATE SYNTHASE"/>
    <property type="match status" value="1"/>
</dbReference>
<dbReference type="PANTHER" id="PTHR11587:SF2">
    <property type="entry name" value="ARGININOSUCCINATE SYNTHASE"/>
    <property type="match status" value="1"/>
</dbReference>
<dbReference type="Pfam" id="PF20979">
    <property type="entry name" value="Arginosuc_syn_C"/>
    <property type="match status" value="1"/>
</dbReference>
<dbReference type="Pfam" id="PF00764">
    <property type="entry name" value="Arginosuc_synth"/>
    <property type="match status" value="1"/>
</dbReference>
<dbReference type="SUPFAM" id="SSF52402">
    <property type="entry name" value="Adenine nucleotide alpha hydrolases-like"/>
    <property type="match status" value="1"/>
</dbReference>
<dbReference type="SUPFAM" id="SSF69864">
    <property type="entry name" value="Argininosuccinate synthetase, C-terminal domain"/>
    <property type="match status" value="1"/>
</dbReference>
<dbReference type="PROSITE" id="PS00564">
    <property type="entry name" value="ARGININOSUCCIN_SYN_1"/>
    <property type="match status" value="1"/>
</dbReference>
<dbReference type="PROSITE" id="PS00565">
    <property type="entry name" value="ARGININOSUCCIN_SYN_2"/>
    <property type="match status" value="1"/>
</dbReference>
<protein>
    <recommendedName>
        <fullName evidence="1">Argininosuccinate synthase</fullName>
        <ecNumber evidence="1">6.3.4.5</ecNumber>
    </recommendedName>
    <alternativeName>
        <fullName evidence="1">Citrulline--aspartate ligase</fullName>
    </alternativeName>
</protein>
<accession>A5V0J9</accession>